<feature type="chain" id="PRO_1000149344" description="2-isopropylmalate synthase">
    <location>
        <begin position="1"/>
        <end position="520"/>
    </location>
</feature>
<feature type="domain" description="Pyruvate carboxyltransferase" evidence="1">
    <location>
        <begin position="5"/>
        <end position="267"/>
    </location>
</feature>
<feature type="region of interest" description="Regulatory domain" evidence="1">
    <location>
        <begin position="392"/>
        <end position="520"/>
    </location>
</feature>
<feature type="binding site" evidence="1">
    <location>
        <position position="14"/>
    </location>
    <ligand>
        <name>Mn(2+)</name>
        <dbReference type="ChEBI" id="CHEBI:29035"/>
    </ligand>
</feature>
<feature type="binding site" evidence="1">
    <location>
        <position position="202"/>
    </location>
    <ligand>
        <name>Mn(2+)</name>
        <dbReference type="ChEBI" id="CHEBI:29035"/>
    </ligand>
</feature>
<feature type="binding site" evidence="1">
    <location>
        <position position="204"/>
    </location>
    <ligand>
        <name>Mn(2+)</name>
        <dbReference type="ChEBI" id="CHEBI:29035"/>
    </ligand>
</feature>
<feature type="binding site" evidence="1">
    <location>
        <position position="238"/>
    </location>
    <ligand>
        <name>Mn(2+)</name>
        <dbReference type="ChEBI" id="CHEBI:29035"/>
    </ligand>
</feature>
<name>LEU1_YERPP</name>
<gene>
    <name evidence="1" type="primary">leuA</name>
    <name type="ordered locus">YPDSF_3106</name>
</gene>
<sequence length="520" mass="57375">MSQQVIIFDTTLRDGEQALQASLSVKEKLQIALALERMGVDIMEVGFPVSSPGDFESVRTIAQQVKNSRVCALARCVDKDIDVAAEALRIAEAFRIHVFLATSTLHIESKLKRSFDDVLAMAVHSVKRARNYTDDVEFSCEDAGRTPIDNLCRVVEAAITAGATTINIPDTVGYTTPYQFGGIITDLYERVPNIDKAIISVHCHDDLGMSVANSITAVQAGARQVEGTINGLGERAGNCSLEEVIMAIKVRHEMLGVHTNINHQEIYRTSQLVSKICNMPIPGNKAIVGSNAFAHSSGIHQDGVLKNRENYEIMTPESIGLKEVQLNLTSRSGRAAVKHRMEEMGYQDKDYNLDSLYDAFLKLADKKGQVFDYDLEALAFINKQQEEPEYYRLDYFSVQSGSSVMATASVKLVCGEEIKSEAATGNGPVDAVYQAINRITDYPIELVKYQLSAKGQGKDALGQVDIVVDHKGRRFHGVGLATDIVESSAKALVHVLNNIWRAHQVEKEKQRLQQNNQEMV</sequence>
<comment type="function">
    <text evidence="1">Catalyzes the condensation of the acetyl group of acetyl-CoA with 3-methyl-2-oxobutanoate (2-ketoisovalerate) to form 3-carboxy-3-hydroxy-4-methylpentanoate (2-isopropylmalate).</text>
</comment>
<comment type="catalytic activity">
    <reaction evidence="1">
        <text>3-methyl-2-oxobutanoate + acetyl-CoA + H2O = (2S)-2-isopropylmalate + CoA + H(+)</text>
        <dbReference type="Rhea" id="RHEA:21524"/>
        <dbReference type="ChEBI" id="CHEBI:1178"/>
        <dbReference type="ChEBI" id="CHEBI:11851"/>
        <dbReference type="ChEBI" id="CHEBI:15377"/>
        <dbReference type="ChEBI" id="CHEBI:15378"/>
        <dbReference type="ChEBI" id="CHEBI:57287"/>
        <dbReference type="ChEBI" id="CHEBI:57288"/>
        <dbReference type="EC" id="2.3.3.13"/>
    </reaction>
</comment>
<comment type="cofactor">
    <cofactor evidence="1">
        <name>Mn(2+)</name>
        <dbReference type="ChEBI" id="CHEBI:29035"/>
    </cofactor>
</comment>
<comment type="pathway">
    <text evidence="1">Amino-acid biosynthesis; L-leucine biosynthesis; L-leucine from 3-methyl-2-oxobutanoate: step 1/4.</text>
</comment>
<comment type="subunit">
    <text evidence="1">Homodimer.</text>
</comment>
<comment type="subcellular location">
    <subcellularLocation>
        <location evidence="1">Cytoplasm</location>
    </subcellularLocation>
</comment>
<comment type="similarity">
    <text evidence="1">Belongs to the alpha-IPM synthase/homocitrate synthase family. LeuA type 1 subfamily.</text>
</comment>
<reference key="1">
    <citation type="submission" date="2007-02" db="EMBL/GenBank/DDBJ databases">
        <title>Complete sequence of chromosome of Yersinia pestis Pestoides F.</title>
        <authorList>
            <consortium name="US DOE Joint Genome Institute"/>
            <person name="Copeland A."/>
            <person name="Lucas S."/>
            <person name="Lapidus A."/>
            <person name="Barry K."/>
            <person name="Detter J.C."/>
            <person name="Glavina del Rio T."/>
            <person name="Hammon N."/>
            <person name="Israni S."/>
            <person name="Dalin E."/>
            <person name="Tice H."/>
            <person name="Pitluck S."/>
            <person name="Di Bartolo G."/>
            <person name="Chain P."/>
            <person name="Malfatti S."/>
            <person name="Shin M."/>
            <person name="Vergez L."/>
            <person name="Schmutz J."/>
            <person name="Larimer F."/>
            <person name="Land M."/>
            <person name="Hauser L."/>
            <person name="Worsham P."/>
            <person name="Chu M."/>
            <person name="Bearden S."/>
            <person name="Garcia E."/>
            <person name="Richardson P."/>
        </authorList>
    </citation>
    <scope>NUCLEOTIDE SEQUENCE [LARGE SCALE GENOMIC DNA]</scope>
    <source>
        <strain>Pestoides F</strain>
    </source>
</reference>
<dbReference type="EC" id="2.3.3.13" evidence="1"/>
<dbReference type="EMBL" id="CP000668">
    <property type="protein sequence ID" value="ABP41464.1"/>
    <property type="molecule type" value="Genomic_DNA"/>
</dbReference>
<dbReference type="RefSeq" id="WP_002210453.1">
    <property type="nucleotide sequence ID" value="NZ_CP009715.1"/>
</dbReference>
<dbReference type="SMR" id="A4TQA2"/>
<dbReference type="GeneID" id="57974079"/>
<dbReference type="KEGG" id="ypp:YPDSF_3106"/>
<dbReference type="PATRIC" id="fig|386656.14.peg.1252"/>
<dbReference type="UniPathway" id="UPA00048">
    <property type="reaction ID" value="UER00070"/>
</dbReference>
<dbReference type="GO" id="GO:0005829">
    <property type="term" value="C:cytosol"/>
    <property type="evidence" value="ECO:0007669"/>
    <property type="project" value="TreeGrafter"/>
</dbReference>
<dbReference type="GO" id="GO:0003852">
    <property type="term" value="F:2-isopropylmalate synthase activity"/>
    <property type="evidence" value="ECO:0007669"/>
    <property type="project" value="UniProtKB-UniRule"/>
</dbReference>
<dbReference type="GO" id="GO:0003985">
    <property type="term" value="F:acetyl-CoA C-acetyltransferase activity"/>
    <property type="evidence" value="ECO:0007669"/>
    <property type="project" value="UniProtKB-UniRule"/>
</dbReference>
<dbReference type="GO" id="GO:0030145">
    <property type="term" value="F:manganese ion binding"/>
    <property type="evidence" value="ECO:0007669"/>
    <property type="project" value="UniProtKB-UniRule"/>
</dbReference>
<dbReference type="GO" id="GO:0009098">
    <property type="term" value="P:L-leucine biosynthetic process"/>
    <property type="evidence" value="ECO:0007669"/>
    <property type="project" value="UniProtKB-UniRule"/>
</dbReference>
<dbReference type="CDD" id="cd07940">
    <property type="entry name" value="DRE_TIM_IPMS"/>
    <property type="match status" value="1"/>
</dbReference>
<dbReference type="FunFam" id="1.10.238.260:FF:000001">
    <property type="entry name" value="2-isopropylmalate synthase"/>
    <property type="match status" value="1"/>
</dbReference>
<dbReference type="FunFam" id="3.20.20.70:FF:000010">
    <property type="entry name" value="2-isopropylmalate synthase"/>
    <property type="match status" value="1"/>
</dbReference>
<dbReference type="FunFam" id="3.30.160.270:FF:000001">
    <property type="entry name" value="2-isopropylmalate synthase"/>
    <property type="match status" value="1"/>
</dbReference>
<dbReference type="Gene3D" id="1.10.238.260">
    <property type="match status" value="1"/>
</dbReference>
<dbReference type="Gene3D" id="3.30.160.270">
    <property type="match status" value="1"/>
</dbReference>
<dbReference type="Gene3D" id="3.20.20.70">
    <property type="entry name" value="Aldolase class I"/>
    <property type="match status" value="1"/>
</dbReference>
<dbReference type="HAMAP" id="MF_01025">
    <property type="entry name" value="LeuA_type1"/>
    <property type="match status" value="1"/>
</dbReference>
<dbReference type="InterPro" id="IPR050073">
    <property type="entry name" value="2-IPM_HCS-like"/>
</dbReference>
<dbReference type="InterPro" id="IPR013709">
    <property type="entry name" value="2-isopropylmalate_synth_dimer"/>
</dbReference>
<dbReference type="InterPro" id="IPR002034">
    <property type="entry name" value="AIPM/Hcit_synth_CS"/>
</dbReference>
<dbReference type="InterPro" id="IPR013785">
    <property type="entry name" value="Aldolase_TIM"/>
</dbReference>
<dbReference type="InterPro" id="IPR054691">
    <property type="entry name" value="LeuA/HCS_post-cat"/>
</dbReference>
<dbReference type="InterPro" id="IPR036230">
    <property type="entry name" value="LeuA_allosteric_dom_sf"/>
</dbReference>
<dbReference type="InterPro" id="IPR005671">
    <property type="entry name" value="LeuA_bact_synth"/>
</dbReference>
<dbReference type="InterPro" id="IPR000891">
    <property type="entry name" value="PYR_CT"/>
</dbReference>
<dbReference type="NCBIfam" id="TIGR00973">
    <property type="entry name" value="leuA_bact"/>
    <property type="match status" value="1"/>
</dbReference>
<dbReference type="NCBIfam" id="NF002084">
    <property type="entry name" value="PRK00915.1-1"/>
    <property type="match status" value="1"/>
</dbReference>
<dbReference type="NCBIfam" id="NF002086">
    <property type="entry name" value="PRK00915.1-3"/>
    <property type="match status" value="1"/>
</dbReference>
<dbReference type="PANTHER" id="PTHR10277:SF9">
    <property type="entry name" value="2-ISOPROPYLMALATE SYNTHASE 1, CHLOROPLASTIC-RELATED"/>
    <property type="match status" value="1"/>
</dbReference>
<dbReference type="PANTHER" id="PTHR10277">
    <property type="entry name" value="HOMOCITRATE SYNTHASE-RELATED"/>
    <property type="match status" value="1"/>
</dbReference>
<dbReference type="Pfam" id="PF22617">
    <property type="entry name" value="HCS_D2"/>
    <property type="match status" value="1"/>
</dbReference>
<dbReference type="Pfam" id="PF00682">
    <property type="entry name" value="HMGL-like"/>
    <property type="match status" value="1"/>
</dbReference>
<dbReference type="Pfam" id="PF08502">
    <property type="entry name" value="LeuA_dimer"/>
    <property type="match status" value="1"/>
</dbReference>
<dbReference type="SMART" id="SM00917">
    <property type="entry name" value="LeuA_dimer"/>
    <property type="match status" value="1"/>
</dbReference>
<dbReference type="SUPFAM" id="SSF110921">
    <property type="entry name" value="2-isopropylmalate synthase LeuA, allosteric (dimerisation) domain"/>
    <property type="match status" value="1"/>
</dbReference>
<dbReference type="SUPFAM" id="SSF51569">
    <property type="entry name" value="Aldolase"/>
    <property type="match status" value="1"/>
</dbReference>
<dbReference type="PROSITE" id="PS00815">
    <property type="entry name" value="AIPM_HOMOCIT_SYNTH_1"/>
    <property type="match status" value="1"/>
</dbReference>
<dbReference type="PROSITE" id="PS00816">
    <property type="entry name" value="AIPM_HOMOCIT_SYNTH_2"/>
    <property type="match status" value="1"/>
</dbReference>
<dbReference type="PROSITE" id="PS50991">
    <property type="entry name" value="PYR_CT"/>
    <property type="match status" value="1"/>
</dbReference>
<keyword id="KW-0028">Amino-acid biosynthesis</keyword>
<keyword id="KW-0100">Branched-chain amino acid biosynthesis</keyword>
<keyword id="KW-0963">Cytoplasm</keyword>
<keyword id="KW-0432">Leucine biosynthesis</keyword>
<keyword id="KW-0464">Manganese</keyword>
<keyword id="KW-0479">Metal-binding</keyword>
<keyword id="KW-0808">Transferase</keyword>
<accession>A4TQA2</accession>
<organism>
    <name type="scientific">Yersinia pestis (strain Pestoides F)</name>
    <dbReference type="NCBI Taxonomy" id="386656"/>
    <lineage>
        <taxon>Bacteria</taxon>
        <taxon>Pseudomonadati</taxon>
        <taxon>Pseudomonadota</taxon>
        <taxon>Gammaproteobacteria</taxon>
        <taxon>Enterobacterales</taxon>
        <taxon>Yersiniaceae</taxon>
        <taxon>Yersinia</taxon>
    </lineage>
</organism>
<evidence type="ECO:0000255" key="1">
    <source>
        <dbReference type="HAMAP-Rule" id="MF_01025"/>
    </source>
</evidence>
<proteinExistence type="inferred from homology"/>
<protein>
    <recommendedName>
        <fullName evidence="1">2-isopropylmalate synthase</fullName>
        <ecNumber evidence="1">2.3.3.13</ecNumber>
    </recommendedName>
    <alternativeName>
        <fullName evidence="1">Alpha-IPM synthase</fullName>
    </alternativeName>
    <alternativeName>
        <fullName evidence="1">Alpha-isopropylmalate synthase</fullName>
    </alternativeName>
</protein>